<comment type="function">
    <text evidence="1">Involved in DNA replication and cell separation during budding.</text>
</comment>
<comment type="subcellular location">
    <subcellularLocation>
        <location evidence="1">Cytoplasm</location>
    </subcellularLocation>
    <subcellularLocation>
        <location evidence="1">Nucleus</location>
    </subcellularLocation>
</comment>
<comment type="similarity">
    <text evidence="5">Belongs to the SDS23 family.</text>
</comment>
<protein>
    <recommendedName>
        <fullName>Protein SDS24</fullName>
    </recommendedName>
</protein>
<organism>
    <name type="scientific">Saccharomyces cerevisiae (strain YJM789)</name>
    <name type="common">Baker's yeast</name>
    <dbReference type="NCBI Taxonomy" id="307796"/>
    <lineage>
        <taxon>Eukaryota</taxon>
        <taxon>Fungi</taxon>
        <taxon>Dikarya</taxon>
        <taxon>Ascomycota</taxon>
        <taxon>Saccharomycotina</taxon>
        <taxon>Saccharomycetes</taxon>
        <taxon>Saccharomycetales</taxon>
        <taxon>Saccharomycetaceae</taxon>
        <taxon>Saccharomyces</taxon>
    </lineage>
</organism>
<dbReference type="EMBL" id="AAFW02000011">
    <property type="protein sequence ID" value="EDN64823.1"/>
    <property type="molecule type" value="Genomic_DNA"/>
</dbReference>
<dbReference type="SMR" id="A6ZLF4"/>
<dbReference type="HOGENOM" id="CLU_024459_1_1_1"/>
<dbReference type="Proteomes" id="UP000007060">
    <property type="component" value="Unassembled WGS sequence"/>
</dbReference>
<dbReference type="GO" id="GO:0005737">
    <property type="term" value="C:cytoplasm"/>
    <property type="evidence" value="ECO:0007669"/>
    <property type="project" value="UniProtKB-SubCell"/>
</dbReference>
<dbReference type="GO" id="GO:0005634">
    <property type="term" value="C:nucleus"/>
    <property type="evidence" value="ECO:0007669"/>
    <property type="project" value="UniProtKB-SubCell"/>
</dbReference>
<dbReference type="GO" id="GO:0004865">
    <property type="term" value="F:protein serine/threonine phosphatase inhibitor activity"/>
    <property type="evidence" value="ECO:0007669"/>
    <property type="project" value="TreeGrafter"/>
</dbReference>
<dbReference type="GO" id="GO:0042149">
    <property type="term" value="P:cellular response to glucose starvation"/>
    <property type="evidence" value="ECO:0007669"/>
    <property type="project" value="InterPro"/>
</dbReference>
<dbReference type="GO" id="GO:0030071">
    <property type="term" value="P:regulation of mitotic metaphase/anaphase transition"/>
    <property type="evidence" value="ECO:0007669"/>
    <property type="project" value="InterPro"/>
</dbReference>
<dbReference type="FunFam" id="3.10.580.10:FF:000035">
    <property type="entry name" value="Protein SDS23"/>
    <property type="match status" value="1"/>
</dbReference>
<dbReference type="FunFam" id="3.10.580.10:FF:000043">
    <property type="entry name" value="Sds23p"/>
    <property type="match status" value="1"/>
</dbReference>
<dbReference type="Gene3D" id="3.10.580.10">
    <property type="entry name" value="CBS-domain"/>
    <property type="match status" value="2"/>
</dbReference>
<dbReference type="InterPro" id="IPR050511">
    <property type="entry name" value="AMPK_gamma/SDS23_families"/>
</dbReference>
<dbReference type="InterPro" id="IPR000644">
    <property type="entry name" value="CBS_dom"/>
</dbReference>
<dbReference type="InterPro" id="IPR046342">
    <property type="entry name" value="CBS_dom_sf"/>
</dbReference>
<dbReference type="InterPro" id="IPR016711">
    <property type="entry name" value="Ssd23"/>
</dbReference>
<dbReference type="PANTHER" id="PTHR13780">
    <property type="entry name" value="AMP-ACTIVATED PROTEIN KINASE, GAMMA REGULATORY SUBUNIT"/>
    <property type="match status" value="1"/>
</dbReference>
<dbReference type="PANTHER" id="PTHR13780:SF36">
    <property type="entry name" value="CBS DOMAIN-CONTAINING PROTEIN"/>
    <property type="match status" value="1"/>
</dbReference>
<dbReference type="Pfam" id="PF00571">
    <property type="entry name" value="CBS"/>
    <property type="match status" value="2"/>
</dbReference>
<dbReference type="PIRSF" id="PIRSF018148">
    <property type="entry name" value="UCP018148_CBS_YBR214w"/>
    <property type="match status" value="1"/>
</dbReference>
<dbReference type="SMART" id="SM00116">
    <property type="entry name" value="CBS"/>
    <property type="match status" value="4"/>
</dbReference>
<dbReference type="SUPFAM" id="SSF54631">
    <property type="entry name" value="CBS-domain pair"/>
    <property type="match status" value="2"/>
</dbReference>
<dbReference type="PROSITE" id="PS51371">
    <property type="entry name" value="CBS"/>
    <property type="match status" value="4"/>
</dbReference>
<gene>
    <name type="primary">SDS24</name>
    <name type="ORF">SCY_0424</name>
</gene>
<name>SDS24_YEAS7</name>
<reference key="1">
    <citation type="journal article" date="2007" name="Proc. Natl. Acad. Sci. U.S.A.">
        <title>Genome sequencing and comparative analysis of Saccharomyces cerevisiae strain YJM789.</title>
        <authorList>
            <person name="Wei W."/>
            <person name="McCusker J.H."/>
            <person name="Hyman R.W."/>
            <person name="Jones T."/>
            <person name="Ning Y."/>
            <person name="Cao Z."/>
            <person name="Gu Z."/>
            <person name="Bruno D."/>
            <person name="Miranda M."/>
            <person name="Nguyen M."/>
            <person name="Wilhelmy J."/>
            <person name="Komp C."/>
            <person name="Tamse R."/>
            <person name="Wang X."/>
            <person name="Jia P."/>
            <person name="Luedi P."/>
            <person name="Oefner P.J."/>
            <person name="David L."/>
            <person name="Dietrich F.S."/>
            <person name="Li Y."/>
            <person name="Davis R.W."/>
            <person name="Steinmetz L.M."/>
        </authorList>
    </citation>
    <scope>NUCLEOTIDE SEQUENCE [LARGE SCALE GENOMIC DNA]</scope>
    <source>
        <strain>YJM789</strain>
    </source>
</reference>
<feature type="chain" id="PRO_0000324964" description="Protein SDS24">
    <location>
        <begin position="1"/>
        <end position="527"/>
    </location>
</feature>
<feature type="domain" description="CBS 1" evidence="3">
    <location>
        <begin position="114"/>
        <end position="175"/>
    </location>
</feature>
<feature type="domain" description="CBS 2" evidence="3">
    <location>
        <begin position="198"/>
        <end position="256"/>
    </location>
</feature>
<feature type="domain" description="CBS 3" evidence="3">
    <location>
        <begin position="283"/>
        <end position="342"/>
    </location>
</feature>
<feature type="domain" description="CBS 4" evidence="3">
    <location>
        <begin position="443"/>
        <end position="512"/>
    </location>
</feature>
<feature type="region of interest" description="Disordered" evidence="4">
    <location>
        <begin position="1"/>
        <end position="75"/>
    </location>
</feature>
<feature type="region of interest" description="Disordered" evidence="4">
    <location>
        <begin position="424"/>
        <end position="478"/>
    </location>
</feature>
<feature type="region of interest" description="Disordered" evidence="4">
    <location>
        <begin position="508"/>
        <end position="527"/>
    </location>
</feature>
<feature type="compositionally biased region" description="Low complexity" evidence="4">
    <location>
        <begin position="1"/>
        <end position="22"/>
    </location>
</feature>
<feature type="compositionally biased region" description="Low complexity" evidence="4">
    <location>
        <begin position="55"/>
        <end position="74"/>
    </location>
</feature>
<feature type="compositionally biased region" description="Low complexity" evidence="4">
    <location>
        <begin position="424"/>
        <end position="447"/>
    </location>
</feature>
<feature type="modified residue" description="Phosphoserine" evidence="2">
    <location>
        <position position="94"/>
    </location>
</feature>
<feature type="modified residue" description="Phosphoserine" evidence="2">
    <location>
        <position position="458"/>
    </location>
</feature>
<feature type="modified residue" description="Phosphoserine" evidence="2">
    <location>
        <position position="524"/>
    </location>
</feature>
<sequence>MASTSNTFPPSQSNSSNNLPTSRHASIVEMLSTPPLLPHVQVNDTDDKEQPEESTPPTATAAAPGPGCAATPAPLRDEKPQFKLSAVPMTQTPSQCLSCVHAQKWQHIPLSQLIEQNKLIFVPGSISVEEAFNTLIKYHLNSIPVESFPGDMNCFTFDYNDLNSYLLLVLNKITVSNKQLTADCQNGKPVPVGEMVKLTPKNPFYKLPENESLSTVMGILGSGVHRVAITNEEMTKVKGILSQRRLIKYLWDNARSFTSLEPLLNSSLQDLHIGVLNIQSKPTSRQSRVISIQGEEPLIMGLYKMHVERISSIAVIDKQGNLLGNISVTDVKHVTRTSQYPLLHKTCRHFISVILNSRGLETGKDSFPIFHVYPSSSLARTLAKLVATKSHRLWIVQPPESSTSASSTNLTAANTAANAVSATAQSSANGATPMSKSSSSTSLNSHSPLMTAMEDPPSPRSSAIAIPPPSPASSTNTPNLFEKEYRTGKLIGVVSLTDIINLLARKQTGNKEVDPQSARRQRGSIAM</sequence>
<evidence type="ECO:0000250" key="1"/>
<evidence type="ECO:0000250" key="2">
    <source>
        <dbReference type="UniProtKB" id="P38314"/>
    </source>
</evidence>
<evidence type="ECO:0000255" key="3">
    <source>
        <dbReference type="PROSITE-ProRule" id="PRU00703"/>
    </source>
</evidence>
<evidence type="ECO:0000256" key="4">
    <source>
        <dbReference type="SAM" id="MobiDB-lite"/>
    </source>
</evidence>
<evidence type="ECO:0000305" key="5"/>
<proteinExistence type="inferred from homology"/>
<accession>A6ZLF4</accession>
<keyword id="KW-0129">CBS domain</keyword>
<keyword id="KW-0963">Cytoplasm</keyword>
<keyword id="KW-0539">Nucleus</keyword>
<keyword id="KW-0597">Phosphoprotein</keyword>
<keyword id="KW-0677">Repeat</keyword>